<comment type="function">
    <text evidence="1">Phosphorylation of dTMP to form dTDP in both de novo and salvage pathways of dTTP synthesis.</text>
</comment>
<comment type="catalytic activity">
    <reaction evidence="1">
        <text>dTMP + ATP = dTDP + ADP</text>
        <dbReference type="Rhea" id="RHEA:13517"/>
        <dbReference type="ChEBI" id="CHEBI:30616"/>
        <dbReference type="ChEBI" id="CHEBI:58369"/>
        <dbReference type="ChEBI" id="CHEBI:63528"/>
        <dbReference type="ChEBI" id="CHEBI:456216"/>
        <dbReference type="EC" id="2.7.4.9"/>
    </reaction>
</comment>
<comment type="similarity">
    <text evidence="1">Belongs to the thymidylate kinase family.</text>
</comment>
<proteinExistence type="inferred from homology"/>
<evidence type="ECO:0000255" key="1">
    <source>
        <dbReference type="HAMAP-Rule" id="MF_00165"/>
    </source>
</evidence>
<sequence length="210" mass="23137">MTGLFVTLEGPEGAGKSTNRDYLAERLRERGIEVQLTREPGGTPLAERIRELLLAPGDEPMAADTELLLMFAARAQHIAGVIRPALARGAVVLCDRFTDATYAYQGGGRGLPEVRIAALESFVQGDLRPDLTLVFDLPVEIGLARAAARGRLDRFEQEDRRFFEAVRQTYLQRAAQAPERYQVLDAGLPLTEVQAGLDRLLPNLLERLNG</sequence>
<feature type="chain" id="PRO_1000023254" description="Thymidylate kinase">
    <location>
        <begin position="1"/>
        <end position="210"/>
    </location>
</feature>
<feature type="binding site" evidence="1">
    <location>
        <begin position="10"/>
        <end position="17"/>
    </location>
    <ligand>
        <name>ATP</name>
        <dbReference type="ChEBI" id="CHEBI:30616"/>
    </ligand>
</feature>
<dbReference type="EC" id="2.7.4.9" evidence="1"/>
<dbReference type="EMBL" id="CP000438">
    <property type="protein sequence ID" value="ABJ12200.1"/>
    <property type="molecule type" value="Genomic_DNA"/>
</dbReference>
<dbReference type="RefSeq" id="WP_003138599.1">
    <property type="nucleotide sequence ID" value="NZ_CP034244.1"/>
</dbReference>
<dbReference type="SMR" id="Q02PC5"/>
<dbReference type="KEGG" id="pau:PA14_25740"/>
<dbReference type="PseudoCAP" id="PA14_25740"/>
<dbReference type="HOGENOM" id="CLU_049131_0_2_6"/>
<dbReference type="BioCyc" id="PAER208963:G1G74-2147-MONOMER"/>
<dbReference type="Proteomes" id="UP000000653">
    <property type="component" value="Chromosome"/>
</dbReference>
<dbReference type="GO" id="GO:0005829">
    <property type="term" value="C:cytosol"/>
    <property type="evidence" value="ECO:0007669"/>
    <property type="project" value="TreeGrafter"/>
</dbReference>
<dbReference type="GO" id="GO:0005524">
    <property type="term" value="F:ATP binding"/>
    <property type="evidence" value="ECO:0007669"/>
    <property type="project" value="UniProtKB-UniRule"/>
</dbReference>
<dbReference type="GO" id="GO:0004798">
    <property type="term" value="F:dTMP kinase activity"/>
    <property type="evidence" value="ECO:0007669"/>
    <property type="project" value="UniProtKB-UniRule"/>
</dbReference>
<dbReference type="GO" id="GO:0006233">
    <property type="term" value="P:dTDP biosynthetic process"/>
    <property type="evidence" value="ECO:0007669"/>
    <property type="project" value="InterPro"/>
</dbReference>
<dbReference type="GO" id="GO:0006235">
    <property type="term" value="P:dTTP biosynthetic process"/>
    <property type="evidence" value="ECO:0007669"/>
    <property type="project" value="UniProtKB-UniRule"/>
</dbReference>
<dbReference type="GO" id="GO:0006227">
    <property type="term" value="P:dUDP biosynthetic process"/>
    <property type="evidence" value="ECO:0007669"/>
    <property type="project" value="TreeGrafter"/>
</dbReference>
<dbReference type="CDD" id="cd01672">
    <property type="entry name" value="TMPK"/>
    <property type="match status" value="1"/>
</dbReference>
<dbReference type="FunFam" id="3.40.50.300:FF:000321">
    <property type="entry name" value="Thymidylate kinase"/>
    <property type="match status" value="1"/>
</dbReference>
<dbReference type="Gene3D" id="3.40.50.300">
    <property type="entry name" value="P-loop containing nucleotide triphosphate hydrolases"/>
    <property type="match status" value="1"/>
</dbReference>
<dbReference type="HAMAP" id="MF_00165">
    <property type="entry name" value="Thymidylate_kinase"/>
    <property type="match status" value="1"/>
</dbReference>
<dbReference type="InterPro" id="IPR027417">
    <property type="entry name" value="P-loop_NTPase"/>
</dbReference>
<dbReference type="InterPro" id="IPR039430">
    <property type="entry name" value="Thymidylate_kin-like_dom"/>
</dbReference>
<dbReference type="InterPro" id="IPR018094">
    <property type="entry name" value="Thymidylate_kinase"/>
</dbReference>
<dbReference type="NCBIfam" id="TIGR00041">
    <property type="entry name" value="DTMP_kinase"/>
    <property type="match status" value="1"/>
</dbReference>
<dbReference type="PANTHER" id="PTHR10344">
    <property type="entry name" value="THYMIDYLATE KINASE"/>
    <property type="match status" value="1"/>
</dbReference>
<dbReference type="PANTHER" id="PTHR10344:SF4">
    <property type="entry name" value="UMP-CMP KINASE 2, MITOCHONDRIAL"/>
    <property type="match status" value="1"/>
</dbReference>
<dbReference type="Pfam" id="PF02223">
    <property type="entry name" value="Thymidylate_kin"/>
    <property type="match status" value="1"/>
</dbReference>
<dbReference type="SUPFAM" id="SSF52540">
    <property type="entry name" value="P-loop containing nucleoside triphosphate hydrolases"/>
    <property type="match status" value="1"/>
</dbReference>
<reference key="1">
    <citation type="journal article" date="2006" name="Genome Biol.">
        <title>Genomic analysis reveals that Pseudomonas aeruginosa virulence is combinatorial.</title>
        <authorList>
            <person name="Lee D.G."/>
            <person name="Urbach J.M."/>
            <person name="Wu G."/>
            <person name="Liberati N.T."/>
            <person name="Feinbaum R.L."/>
            <person name="Miyata S."/>
            <person name="Diggins L.T."/>
            <person name="He J."/>
            <person name="Saucier M."/>
            <person name="Deziel E."/>
            <person name="Friedman L."/>
            <person name="Li L."/>
            <person name="Grills G."/>
            <person name="Montgomery K."/>
            <person name="Kucherlapati R."/>
            <person name="Rahme L.G."/>
            <person name="Ausubel F.M."/>
        </authorList>
    </citation>
    <scope>NUCLEOTIDE SEQUENCE [LARGE SCALE GENOMIC DNA]</scope>
    <source>
        <strain>UCBPP-PA14</strain>
    </source>
</reference>
<keyword id="KW-0067">ATP-binding</keyword>
<keyword id="KW-0418">Kinase</keyword>
<keyword id="KW-0545">Nucleotide biosynthesis</keyword>
<keyword id="KW-0547">Nucleotide-binding</keyword>
<keyword id="KW-0808">Transferase</keyword>
<accession>Q02PC5</accession>
<protein>
    <recommendedName>
        <fullName evidence="1">Thymidylate kinase</fullName>
        <ecNumber evidence="1">2.7.4.9</ecNumber>
    </recommendedName>
    <alternativeName>
        <fullName evidence="1">dTMP kinase</fullName>
    </alternativeName>
</protein>
<organism>
    <name type="scientific">Pseudomonas aeruginosa (strain UCBPP-PA14)</name>
    <dbReference type="NCBI Taxonomy" id="208963"/>
    <lineage>
        <taxon>Bacteria</taxon>
        <taxon>Pseudomonadati</taxon>
        <taxon>Pseudomonadota</taxon>
        <taxon>Gammaproteobacteria</taxon>
        <taxon>Pseudomonadales</taxon>
        <taxon>Pseudomonadaceae</taxon>
        <taxon>Pseudomonas</taxon>
    </lineage>
</organism>
<gene>
    <name evidence="1" type="primary">tmk</name>
    <name type="ordered locus">PA14_25740</name>
</gene>
<name>KTHY_PSEAB</name>